<evidence type="ECO:0000255" key="1">
    <source>
        <dbReference type="HAMAP-Rule" id="MF_00530"/>
    </source>
</evidence>
<accession>P69443</accession>
<accession>P00836</accession>
<accession>P20859</accession>
<organism>
    <name type="scientific">Triticum aestivum</name>
    <name type="common">Wheat</name>
    <dbReference type="NCBI Taxonomy" id="4565"/>
    <lineage>
        <taxon>Eukaryota</taxon>
        <taxon>Viridiplantae</taxon>
        <taxon>Streptophyta</taxon>
        <taxon>Embryophyta</taxon>
        <taxon>Tracheophyta</taxon>
        <taxon>Spermatophyta</taxon>
        <taxon>Magnoliopsida</taxon>
        <taxon>Liliopsida</taxon>
        <taxon>Poales</taxon>
        <taxon>Poaceae</taxon>
        <taxon>BOP clade</taxon>
        <taxon>Pooideae</taxon>
        <taxon>Triticodae</taxon>
        <taxon>Triticeae</taxon>
        <taxon>Triticinae</taxon>
        <taxon>Triticum</taxon>
    </lineage>
</organism>
<comment type="function">
    <text evidence="1">Produces ATP from ADP in the presence of a proton gradient across the membrane.</text>
</comment>
<comment type="subunit">
    <text evidence="1">F-type ATPases have 2 components, CF(1) - the catalytic core - and CF(0) - the membrane proton channel. CF(1) has five subunits: alpha(3), beta(3), gamma(1), delta(1), epsilon(1). CF(0) has three main subunits: a, b and c.</text>
</comment>
<comment type="subcellular location">
    <subcellularLocation>
        <location evidence="1">Plastid</location>
        <location evidence="1">Chloroplast thylakoid membrane</location>
        <topology evidence="1">Peripheral membrane protein</topology>
    </subcellularLocation>
</comment>
<comment type="similarity">
    <text evidence="1">Belongs to the ATPase epsilon chain family.</text>
</comment>
<geneLocation type="chloroplast"/>
<protein>
    <recommendedName>
        <fullName evidence="1">ATP synthase epsilon chain, chloroplastic</fullName>
    </recommendedName>
    <alternativeName>
        <fullName evidence="1">ATP synthase F1 sector epsilon subunit</fullName>
    </alternativeName>
    <alternativeName>
        <fullName evidence="1">F-ATPase epsilon subunit</fullName>
    </alternativeName>
</protein>
<feature type="chain" id="PRO_0000188296" description="ATP synthase epsilon chain, chloroplastic">
    <location>
        <begin position="1"/>
        <end position="137"/>
    </location>
</feature>
<name>ATPE_WHEAT</name>
<keyword id="KW-0066">ATP synthesis</keyword>
<keyword id="KW-0139">CF(1)</keyword>
<keyword id="KW-0150">Chloroplast</keyword>
<keyword id="KW-0375">Hydrogen ion transport</keyword>
<keyword id="KW-0406">Ion transport</keyword>
<keyword id="KW-0472">Membrane</keyword>
<keyword id="KW-0934">Plastid</keyword>
<keyword id="KW-1185">Reference proteome</keyword>
<keyword id="KW-0793">Thylakoid</keyword>
<keyword id="KW-0813">Transport</keyword>
<sequence length="137" mass="15218">MKLNLYVLTPKRIIWDCEVKEIILSTNSGQIGVLPNHAPINTAVDMGPLRIRLLNDQWLTAVLWSGFARIVNNEIIILGNDAELGSDIDPEEAQKALEIAEANLSKAEGTKDLVEAKLALRRARIRIEAVNWIPPSN</sequence>
<reference key="1">
    <citation type="journal article" date="1985" name="Plant Mol. Biol.">
        <title>Nucleotide sequences of the genes for the alpha, beta and epsilon subunits of wheat chloroplast ATP synthase.</title>
        <authorList>
            <person name="Howe C.J."/>
            <person name="Fearnley I.M."/>
            <person name="Walker J.E."/>
            <person name="Dyer T.A."/>
            <person name="Gray J.C."/>
        </authorList>
        <dbReference type="AGRICOLA" id="IND85057686"/>
    </citation>
    <scope>NUCLEOTIDE SEQUENCE [GENOMIC DNA]</scope>
</reference>
<reference key="2">
    <citation type="journal article" date="2000" name="Plant Mol. Biol. Rep.">
        <title>Chinese spring wheat (Triticum aestivum L.) chloroplast genome: complete sequence and contig clones.</title>
        <authorList>
            <person name="Ogihara Y."/>
            <person name="Isono K."/>
            <person name="Kojima T."/>
            <person name="Endo A."/>
            <person name="Hanaoka M."/>
            <person name="Shiina T."/>
            <person name="Terachi T."/>
            <person name="Utsugi S."/>
            <person name="Murata M."/>
            <person name="Mori N."/>
            <person name="Takumi S."/>
            <person name="Ikeo K."/>
            <person name="Gojobori T."/>
            <person name="Murai R."/>
            <person name="Murai K."/>
            <person name="Matsuoka Y."/>
            <person name="Ohnishi Y."/>
            <person name="Tajiri H."/>
            <person name="Tsunewaki K."/>
        </authorList>
    </citation>
    <scope>NUCLEOTIDE SEQUENCE [LARGE SCALE GENOMIC DNA]</scope>
    <source>
        <strain>cv. Chinese Spring</strain>
    </source>
</reference>
<dbReference type="EMBL" id="M16843">
    <property type="protein sequence ID" value="AAA84727.1"/>
    <property type="molecule type" value="Genomic_DNA"/>
</dbReference>
<dbReference type="EMBL" id="AB042240">
    <property type="protein sequence ID" value="BAB47040.1"/>
    <property type="molecule type" value="Genomic_DNA"/>
</dbReference>
<dbReference type="PIR" id="S07938">
    <property type="entry name" value="PWWTE"/>
</dbReference>
<dbReference type="RefSeq" id="NP_114265.1">
    <property type="nucleotide sequence ID" value="NC_002762.1"/>
</dbReference>
<dbReference type="SMR" id="P69443"/>
<dbReference type="STRING" id="4565.P69443"/>
<dbReference type="PaxDb" id="4565-EPlTAEP00000010064"/>
<dbReference type="EnsemblPlants" id="TraesARI1D03G00489370.1">
    <property type="protein sequence ID" value="TraesARI1D03G00489370.1.CDS1"/>
    <property type="gene ID" value="TraesARI1D03G00489370"/>
</dbReference>
<dbReference type="EnsemblPlants" id="TraesARI2D03G01325260.1">
    <property type="protein sequence ID" value="TraesARI2D03G01325260.1.CDS1"/>
    <property type="gene ID" value="TraesARI2D03G01325260"/>
</dbReference>
<dbReference type="EnsemblPlants" id="TraesCS1D02G181400.1">
    <property type="protein sequence ID" value="TraesCS1D02G181400.1.cds1"/>
    <property type="gene ID" value="TraesCS1D02G181400"/>
</dbReference>
<dbReference type="EnsemblPlants" id="TraesCS1D03G0467100.1">
    <property type="protein sequence ID" value="TraesCS1D03G0467100.1.CDS1"/>
    <property type="gene ID" value="TraesCS1D03G0467100"/>
</dbReference>
<dbReference type="EnsemblPlants" id="TraesCSU02G251400.1">
    <property type="protein sequence ID" value="TraesCSU02G251400.1.cds1"/>
    <property type="gene ID" value="TraesCSU02G251400"/>
</dbReference>
<dbReference type="EnsemblPlants" id="TraesCSU03G0472000.1">
    <property type="protein sequence ID" value="TraesCSU03G0472000.1.CDS1"/>
    <property type="gene ID" value="TraesCSU03G0472000"/>
</dbReference>
<dbReference type="EnsemblPlants" id="TraesJAG1D03G00483260.1">
    <property type="protein sequence ID" value="TraesJAG1D03G00483260.1.CDS1"/>
    <property type="gene ID" value="TraesJAG1D03G00483260"/>
</dbReference>
<dbReference type="EnsemblPlants" id="TraesJUL1D03G00486730.1">
    <property type="protein sequence ID" value="TraesJUL1D03G00486730.1.CDS1"/>
    <property type="gene ID" value="TraesJUL1D03G00486730"/>
</dbReference>
<dbReference type="EnsemblPlants" id="TraesJUL2D03G01303120.1">
    <property type="protein sequence ID" value="TraesJUL2D03G01303120.1.CDS1"/>
    <property type="gene ID" value="TraesJUL2D03G01303120"/>
</dbReference>
<dbReference type="EnsemblPlants" id="TraesKAR1D01G0184560.1">
    <property type="protein sequence ID" value="cds.TraesKAR1D01G0184560.1"/>
    <property type="gene ID" value="TraesKAR1D01G0184560"/>
</dbReference>
<dbReference type="EnsemblPlants" id="TraesKAR2D01G0456710.1">
    <property type="protein sequence ID" value="cds.TraesKAR2D01G0456710.1"/>
    <property type="gene ID" value="TraesKAR2D01G0456710"/>
</dbReference>
<dbReference type="EnsemblPlants" id="TraesKAR6B01G0219510.1">
    <property type="protein sequence ID" value="cds.TraesKAR6B01G0219510.1"/>
    <property type="gene ID" value="TraesKAR6B01G0219510"/>
</dbReference>
<dbReference type="EnsemblPlants" id="TraesKAR7D01G0461580.1">
    <property type="protein sequence ID" value="cds.TraesKAR7D01G0461580.1"/>
    <property type="gene ID" value="TraesKAR7D01G0461580"/>
</dbReference>
<dbReference type="EnsemblPlants" id="TraesKARUn01G0027030.1">
    <property type="protein sequence ID" value="cds.TraesKARUn01G0027030.1"/>
    <property type="gene ID" value="TraesKARUn01G0027030"/>
</dbReference>
<dbReference type="EnsemblPlants" id="TraesKARUn01G0028110.1">
    <property type="protein sequence ID" value="cds.TraesKARUn01G0028110.1"/>
    <property type="gene ID" value="TraesKARUn01G0028110"/>
</dbReference>
<dbReference type="EnsemblPlants" id="TraesKARUn01G0028920.1">
    <property type="protein sequence ID" value="cds.TraesKARUn01G0028920.1"/>
    <property type="gene ID" value="TraesKARUn01G0028920"/>
</dbReference>
<dbReference type="EnsemblPlants" id="TraesKARUn01G0030420.1">
    <property type="protein sequence ID" value="cds.TraesKARUn01G0030420.1"/>
    <property type="gene ID" value="TraesKARUn01G0030420"/>
</dbReference>
<dbReference type="EnsemblPlants" id="TraesKARUn01G0034410.1">
    <property type="protein sequence ID" value="cds.TraesKARUn01G0034410.1"/>
    <property type="gene ID" value="TraesKARUn01G0034410"/>
</dbReference>
<dbReference type="EnsemblPlants" id="TraesKARUn01G0035560.1">
    <property type="protein sequence ID" value="cds.TraesKARUn01G0035560.1"/>
    <property type="gene ID" value="TraesKARUn01G0035560"/>
</dbReference>
<dbReference type="EnsemblPlants" id="TraesKARUn01G0066910.1">
    <property type="protein sequence ID" value="cds.TraesKARUn01G0066910.1"/>
    <property type="gene ID" value="TraesKARUn01G0066910"/>
</dbReference>
<dbReference type="EnsemblPlants" id="TraesKARUn01G0066960.1">
    <property type="protein sequence ID" value="cds.TraesKARUn01G0066960.1"/>
    <property type="gene ID" value="TraesKARUn01G0066960"/>
</dbReference>
<dbReference type="EnsemblPlants" id="TraesKARUn01G0075590.1">
    <property type="protein sequence ID" value="cds.TraesKARUn01G0075590.1"/>
    <property type="gene ID" value="TraesKARUn01G0075590"/>
</dbReference>
<dbReference type="EnsemblPlants" id="TraesKARUn01G0080750.1">
    <property type="protein sequence ID" value="cds.TraesKARUn01G0080750.1"/>
    <property type="gene ID" value="TraesKARUn01G0080750"/>
</dbReference>
<dbReference type="EnsemblPlants" id="TraesKARUn01G0080800.1">
    <property type="protein sequence ID" value="cds.TraesKARUn01G0080800.1"/>
    <property type="gene ID" value="TraesKARUn01G0080800"/>
</dbReference>
<dbReference type="EnsemblPlants" id="TraesKARUn01G0088780.1">
    <property type="protein sequence ID" value="cds.TraesKARUn01G0088780.1"/>
    <property type="gene ID" value="TraesKARUn01G0088780"/>
</dbReference>
<dbReference type="EnsemblPlants" id="TraesKARUn01G0089970.1">
    <property type="protein sequence ID" value="cds.TraesKARUn01G0089970.1"/>
    <property type="gene ID" value="TraesKARUn01G0089970"/>
</dbReference>
<dbReference type="EnsemblPlants" id="TraesKARUn01G0091010.1">
    <property type="protein sequence ID" value="cds.TraesKARUn01G0091010.1"/>
    <property type="gene ID" value="TraesKARUn01G0091010"/>
</dbReference>
<dbReference type="EnsemblPlants" id="TraesKARUn01G0095800.1">
    <property type="protein sequence ID" value="cds.TraesKARUn01G0095800.1"/>
    <property type="gene ID" value="TraesKARUn01G0095800"/>
</dbReference>
<dbReference type="EnsemblPlants" id="TraesKARUn01G0095940.1">
    <property type="protein sequence ID" value="cds.TraesKARUn01G0095940.1"/>
    <property type="gene ID" value="TraesKARUn01G0095940"/>
</dbReference>
<dbReference type="EnsemblPlants" id="TraesKARUn01G0097160.1">
    <property type="protein sequence ID" value="cds.TraesKARUn01G0097160.1"/>
    <property type="gene ID" value="TraesKARUn01G0097160"/>
</dbReference>
<dbReference type="EnsemblPlants" id="TraesKARUn01G0102140.1">
    <property type="protein sequence ID" value="cds.TraesKARUn01G0102140.1"/>
    <property type="gene ID" value="TraesKARUn01G0102140"/>
</dbReference>
<dbReference type="EnsemblPlants" id="TraesKARUn01G0102480.1">
    <property type="protein sequence ID" value="cds.TraesKARUn01G0102480.1"/>
    <property type="gene ID" value="TraesKARUn01G0102480"/>
</dbReference>
<dbReference type="EnsemblPlants" id="TraesKARUn01G0113370.1">
    <property type="protein sequence ID" value="cds.TraesKARUn01G0113370.1"/>
    <property type="gene ID" value="TraesKARUn01G0113370"/>
</dbReference>
<dbReference type="EnsemblPlants" id="TraesKARUn01G0119260.1">
    <property type="protein sequence ID" value="cds.TraesKARUn01G0119260.1"/>
    <property type="gene ID" value="TraesKARUn01G0119260"/>
</dbReference>
<dbReference type="EnsemblPlants" id="TraesKARUn01G0122970.1">
    <property type="protein sequence ID" value="cds.TraesKARUn01G0122970.1"/>
    <property type="gene ID" value="TraesKARUn01G0122970"/>
</dbReference>
<dbReference type="EnsemblPlants" id="TraesKARUn01G0126840.1">
    <property type="protein sequence ID" value="cds.TraesKARUn01G0126840.1"/>
    <property type="gene ID" value="TraesKARUn01G0126840"/>
</dbReference>
<dbReference type="EnsemblPlants" id="TraesKARUn01G0129370.1">
    <property type="protein sequence ID" value="cds.TraesKARUn01G0129370.1"/>
    <property type="gene ID" value="TraesKARUn01G0129370"/>
</dbReference>
<dbReference type="EnsemblPlants" id="TraesKARUn01G0133210.1">
    <property type="protein sequence ID" value="cds.TraesKARUn01G0133210.1"/>
    <property type="gene ID" value="TraesKARUn01G0133210"/>
</dbReference>
<dbReference type="EnsemblPlants" id="TraesKARUn01G0141040.1">
    <property type="protein sequence ID" value="cds.TraesKARUn01G0141040.1"/>
    <property type="gene ID" value="TraesKARUn01G0141040"/>
</dbReference>
<dbReference type="EnsemblPlants" id="TraesKARUn01G0152060.1">
    <property type="protein sequence ID" value="cds.TraesKARUn01G0152060.1"/>
    <property type="gene ID" value="TraesKARUn01G0152060"/>
</dbReference>
<dbReference type="EnsemblPlants" id="TraesKARUn01G0154950.1">
    <property type="protein sequence ID" value="cds.TraesKARUn01G0154950.1"/>
    <property type="gene ID" value="TraesKARUn01G0154950"/>
</dbReference>
<dbReference type="EnsemblPlants" id="TraesKARUn01G0155020.1">
    <property type="protein sequence ID" value="cds.TraesKARUn01G0155020.1"/>
    <property type="gene ID" value="TraesKARUn01G0155020"/>
</dbReference>
<dbReference type="EnsemblPlants" id="TraesKARUn01G0169110.1">
    <property type="protein sequence ID" value="cds.TraesKARUn01G0169110.1"/>
    <property type="gene ID" value="TraesKARUn01G0169110"/>
</dbReference>
<dbReference type="EnsemblPlants" id="TraesKARUn01G0183040.1">
    <property type="protein sequence ID" value="cds.TraesKARUn01G0183040.1"/>
    <property type="gene ID" value="TraesKARUn01G0183040"/>
</dbReference>
<dbReference type="EnsemblPlants" id="TraesKARUn01G0188510.1">
    <property type="protein sequence ID" value="cds.TraesKARUn01G0188510.1"/>
    <property type="gene ID" value="TraesKARUn01G0188510"/>
</dbReference>
<dbReference type="EnsemblPlants" id="TraesKARUn01G0189590.1">
    <property type="protein sequence ID" value="cds.TraesKARUn01G0189590.1"/>
    <property type="gene ID" value="TraesKARUn01G0189590"/>
</dbReference>
<dbReference type="EnsemblPlants" id="TraesLAC2D03G01244990.1">
    <property type="protein sequence ID" value="TraesLAC2D03G01244990.1.CDS1"/>
    <property type="gene ID" value="TraesLAC2D03G01244990"/>
</dbReference>
<dbReference type="EnsemblPlants" id="TraesLDM1D03G00486510.1">
    <property type="protein sequence ID" value="TraesLDM1D03G00486510.1.CDS1"/>
    <property type="gene ID" value="TraesLDM1D03G00486510"/>
</dbReference>
<dbReference type="EnsemblPlants" id="TraesLDM2D03G01293870.1">
    <property type="protein sequence ID" value="TraesLDM2D03G01293870.1.CDS1"/>
    <property type="gene ID" value="TraesLDM2D03G01293870"/>
</dbReference>
<dbReference type="EnsemblPlants" id="TraesMAC1D03G00483250.1">
    <property type="protein sequence ID" value="TraesMAC1D03G00483250.1.CDS1"/>
    <property type="gene ID" value="TraesMAC1D03G00483250"/>
</dbReference>
<dbReference type="EnsemblPlants" id="TraesNOR1D03G00491440.1">
    <property type="protein sequence ID" value="TraesNOR1D03G00491440.1.CDS1"/>
    <property type="gene ID" value="TraesNOR1D03G00491440"/>
</dbReference>
<dbReference type="EnsemblPlants" id="TraesNOR3B03G01768160.1">
    <property type="protein sequence ID" value="TraesNOR3B03G01768160.1.CDS1"/>
    <property type="gene ID" value="TraesNOR3B03G01768160"/>
</dbReference>
<dbReference type="EnsemblPlants" id="TraesPARA_EIv1.0_0272520.1">
    <property type="protein sequence ID" value="TraesPARA_EIv1.0_0272520.1.CDS1"/>
    <property type="gene ID" value="TraesPARA_EIv1.0_0272520"/>
</dbReference>
<dbReference type="EnsemblPlants" id="TraesPARA_EIv1.0_0757300.1">
    <property type="protein sequence ID" value="TraesPARA_EIv1.0_0757300.1.CDS1"/>
    <property type="gene ID" value="TraesPARA_EIv1.0_0757300"/>
</dbReference>
<dbReference type="EnsemblPlants" id="TraesPARA_EIv1.0_2647490.1">
    <property type="protein sequence ID" value="TraesPARA_EIv1.0_2647490.1.CDS1"/>
    <property type="gene ID" value="TraesPARA_EIv1.0_2647490"/>
</dbReference>
<dbReference type="EnsemblPlants" id="TraesPARA_EIv1.0_2652000.1">
    <property type="protein sequence ID" value="TraesPARA_EIv1.0_2652000.1.CDS1"/>
    <property type="gene ID" value="TraesPARA_EIv1.0_2652000"/>
</dbReference>
<dbReference type="EnsemblPlants" id="TraesPARA_EIv1.0_2660340.1">
    <property type="protein sequence ID" value="TraesPARA_EIv1.0_2660340.1.CDS1"/>
    <property type="gene ID" value="TraesPARA_EIv1.0_2660340"/>
</dbReference>
<dbReference type="EnsemblPlants" id="TraesPARA_EIv1.0_2664520.1">
    <property type="protein sequence ID" value="TraesPARA_EIv1.0_2664520.1.CDS1"/>
    <property type="gene ID" value="TraesPARA_EIv1.0_2664520"/>
</dbReference>
<dbReference type="EnsemblPlants" id="TraesPARA_EIv1.0_2667290.1">
    <property type="protein sequence ID" value="TraesPARA_EIv1.0_2667290.1.CDS1"/>
    <property type="gene ID" value="TraesPARA_EIv1.0_2667290"/>
</dbReference>
<dbReference type="EnsemblPlants" id="TraesPARA_EIv1.0_2671980.1">
    <property type="protein sequence ID" value="TraesPARA_EIv1.0_2671980.1.CDS1"/>
    <property type="gene ID" value="TraesPARA_EIv1.0_2671980"/>
</dbReference>
<dbReference type="EnsemblPlants" id="TraesPARA_EIv1.0_2672500.1">
    <property type="protein sequence ID" value="TraesPARA_EIv1.0_2672500.1.CDS1"/>
    <property type="gene ID" value="TraesPARA_EIv1.0_2672500"/>
</dbReference>
<dbReference type="EnsemblPlants" id="TraesRN1D0100500900.1">
    <property type="protein sequence ID" value="TraesRN1D0100500900.1"/>
    <property type="gene ID" value="TraesRN1D0100500900"/>
</dbReference>
<dbReference type="EnsemblPlants" id="TraesSTA1D03G00482510.1">
    <property type="protein sequence ID" value="TraesSTA1D03G00482510.1.CDS1"/>
    <property type="gene ID" value="TraesSTA1D03G00482510"/>
</dbReference>
<dbReference type="EnsemblPlants" id="TraesSTA2D03G01281870.1">
    <property type="protein sequence ID" value="TraesSTA2D03G01281870.1.CDS1"/>
    <property type="gene ID" value="TraesSTA2D03G01281870"/>
</dbReference>
<dbReference type="EnsemblPlants" id="TraesSTA5D03G03181740.1">
    <property type="protein sequence ID" value="TraesSTA5D03G03181740.1.CDS1"/>
    <property type="gene ID" value="TraesSTA5D03G03181740"/>
</dbReference>
<dbReference type="EnsemblPlants" id="TraesSYM1D03G00490450.1">
    <property type="protein sequence ID" value="TraesSYM1D03G00490450.1.CDS1"/>
    <property type="gene ID" value="TraesSYM1D03G00490450"/>
</dbReference>
<dbReference type="EnsemblPlants" id="TraesSYM2D03G01311500.1">
    <property type="protein sequence ID" value="TraesSYM2D03G01311500.1.CDS1"/>
    <property type="gene ID" value="TraesSYM2D03G01311500"/>
</dbReference>
<dbReference type="EnsemblPlants" id="TraesSYM6B03G03377930.1">
    <property type="protein sequence ID" value="TraesSYM6B03G03377930.1.CDS1"/>
    <property type="gene ID" value="TraesSYM6B03G03377930"/>
</dbReference>
<dbReference type="GeneID" id="803096"/>
<dbReference type="Gramene" id="TraesARI1D03G00489370.1">
    <property type="protein sequence ID" value="TraesARI1D03G00489370.1.CDS1"/>
    <property type="gene ID" value="TraesARI1D03G00489370"/>
</dbReference>
<dbReference type="Gramene" id="TraesARI2D03G01325260.1">
    <property type="protein sequence ID" value="TraesARI2D03G01325260.1.CDS1"/>
    <property type="gene ID" value="TraesARI2D03G01325260"/>
</dbReference>
<dbReference type="Gramene" id="TraesCS1D02G181400.1">
    <property type="protein sequence ID" value="TraesCS1D02G181400.1.cds1"/>
    <property type="gene ID" value="TraesCS1D02G181400"/>
</dbReference>
<dbReference type="Gramene" id="TraesCS1D03G0467100.1">
    <property type="protein sequence ID" value="TraesCS1D03G0467100.1.CDS1"/>
    <property type="gene ID" value="TraesCS1D03G0467100"/>
</dbReference>
<dbReference type="Gramene" id="TraesCSU02G251400.1">
    <property type="protein sequence ID" value="TraesCSU02G251400.1.cds1"/>
    <property type="gene ID" value="TraesCSU02G251400"/>
</dbReference>
<dbReference type="Gramene" id="TraesCSU03G0472000.1">
    <property type="protein sequence ID" value="TraesCSU03G0472000.1.CDS1"/>
    <property type="gene ID" value="TraesCSU03G0472000"/>
</dbReference>
<dbReference type="Gramene" id="TraesJAG1D03G00483260.1">
    <property type="protein sequence ID" value="TraesJAG1D03G00483260.1.CDS1"/>
    <property type="gene ID" value="TraesJAG1D03G00483260"/>
</dbReference>
<dbReference type="Gramene" id="TraesJUL1D03G00486730.1">
    <property type="protein sequence ID" value="TraesJUL1D03G00486730.1.CDS1"/>
    <property type="gene ID" value="TraesJUL1D03G00486730"/>
</dbReference>
<dbReference type="Gramene" id="TraesJUL2D03G01303120.1">
    <property type="protein sequence ID" value="TraesJUL2D03G01303120.1.CDS1"/>
    <property type="gene ID" value="TraesJUL2D03G01303120"/>
</dbReference>
<dbReference type="Gramene" id="TraesKAR1D01G0184560.1">
    <property type="protein sequence ID" value="cds.TraesKAR1D01G0184560.1"/>
    <property type="gene ID" value="TraesKAR1D01G0184560"/>
</dbReference>
<dbReference type="Gramene" id="TraesKAR2D01G0456710.1">
    <property type="protein sequence ID" value="cds.TraesKAR2D01G0456710.1"/>
    <property type="gene ID" value="TraesKAR2D01G0456710"/>
</dbReference>
<dbReference type="Gramene" id="TraesKAR6B01G0219510.1">
    <property type="protein sequence ID" value="cds.TraesKAR6B01G0219510.1"/>
    <property type="gene ID" value="TraesKAR6B01G0219510"/>
</dbReference>
<dbReference type="Gramene" id="TraesKAR7D01G0461580.1">
    <property type="protein sequence ID" value="cds.TraesKAR7D01G0461580.1"/>
    <property type="gene ID" value="TraesKAR7D01G0461580"/>
</dbReference>
<dbReference type="Gramene" id="TraesKARUn01G0027030.1">
    <property type="protein sequence ID" value="cds.TraesKARUn01G0027030.1"/>
    <property type="gene ID" value="TraesKARUn01G0027030"/>
</dbReference>
<dbReference type="Gramene" id="TraesKARUn01G0028110.1">
    <property type="protein sequence ID" value="cds.TraesKARUn01G0028110.1"/>
    <property type="gene ID" value="TraesKARUn01G0028110"/>
</dbReference>
<dbReference type="Gramene" id="TraesKARUn01G0028920.1">
    <property type="protein sequence ID" value="cds.TraesKARUn01G0028920.1"/>
    <property type="gene ID" value="TraesKARUn01G0028920"/>
</dbReference>
<dbReference type="Gramene" id="TraesKARUn01G0030420.1">
    <property type="protein sequence ID" value="cds.TraesKARUn01G0030420.1"/>
    <property type="gene ID" value="TraesKARUn01G0030420"/>
</dbReference>
<dbReference type="Gramene" id="TraesKARUn01G0034410.1">
    <property type="protein sequence ID" value="cds.TraesKARUn01G0034410.1"/>
    <property type="gene ID" value="TraesKARUn01G0034410"/>
</dbReference>
<dbReference type="Gramene" id="TraesKARUn01G0035560.1">
    <property type="protein sequence ID" value="cds.TraesKARUn01G0035560.1"/>
    <property type="gene ID" value="TraesKARUn01G0035560"/>
</dbReference>
<dbReference type="Gramene" id="TraesKARUn01G0066910.1">
    <property type="protein sequence ID" value="cds.TraesKARUn01G0066910.1"/>
    <property type="gene ID" value="TraesKARUn01G0066910"/>
</dbReference>
<dbReference type="Gramene" id="TraesKARUn01G0066960.1">
    <property type="protein sequence ID" value="cds.TraesKARUn01G0066960.1"/>
    <property type="gene ID" value="TraesKARUn01G0066960"/>
</dbReference>
<dbReference type="Gramene" id="TraesKARUn01G0075590.1">
    <property type="protein sequence ID" value="cds.TraesKARUn01G0075590.1"/>
    <property type="gene ID" value="TraesKARUn01G0075590"/>
</dbReference>
<dbReference type="Gramene" id="TraesKARUn01G0080750.1">
    <property type="protein sequence ID" value="cds.TraesKARUn01G0080750.1"/>
    <property type="gene ID" value="TraesKARUn01G0080750"/>
</dbReference>
<dbReference type="Gramene" id="TraesKARUn01G0080800.1">
    <property type="protein sequence ID" value="cds.TraesKARUn01G0080800.1"/>
    <property type="gene ID" value="TraesKARUn01G0080800"/>
</dbReference>
<dbReference type="Gramene" id="TraesKARUn01G0088780.1">
    <property type="protein sequence ID" value="cds.TraesKARUn01G0088780.1"/>
    <property type="gene ID" value="TraesKARUn01G0088780"/>
</dbReference>
<dbReference type="Gramene" id="TraesKARUn01G0089970.1">
    <property type="protein sequence ID" value="cds.TraesKARUn01G0089970.1"/>
    <property type="gene ID" value="TraesKARUn01G0089970"/>
</dbReference>
<dbReference type="Gramene" id="TraesKARUn01G0091010.1">
    <property type="protein sequence ID" value="cds.TraesKARUn01G0091010.1"/>
    <property type="gene ID" value="TraesKARUn01G0091010"/>
</dbReference>
<dbReference type="Gramene" id="TraesKARUn01G0095800.1">
    <property type="protein sequence ID" value="cds.TraesKARUn01G0095800.1"/>
    <property type="gene ID" value="TraesKARUn01G0095800"/>
</dbReference>
<dbReference type="Gramene" id="TraesKARUn01G0095940.1">
    <property type="protein sequence ID" value="cds.TraesKARUn01G0095940.1"/>
    <property type="gene ID" value="TraesKARUn01G0095940"/>
</dbReference>
<dbReference type="Gramene" id="TraesKARUn01G0097160.1">
    <property type="protein sequence ID" value="cds.TraesKARUn01G0097160.1"/>
    <property type="gene ID" value="TraesKARUn01G0097160"/>
</dbReference>
<dbReference type="Gramene" id="TraesKARUn01G0102140.1">
    <property type="protein sequence ID" value="cds.TraesKARUn01G0102140.1"/>
    <property type="gene ID" value="TraesKARUn01G0102140"/>
</dbReference>
<dbReference type="Gramene" id="TraesKARUn01G0102480.1">
    <property type="protein sequence ID" value="cds.TraesKARUn01G0102480.1"/>
    <property type="gene ID" value="TraesKARUn01G0102480"/>
</dbReference>
<dbReference type="Gramene" id="TraesKARUn01G0113370.1">
    <property type="protein sequence ID" value="cds.TraesKARUn01G0113370.1"/>
    <property type="gene ID" value="TraesKARUn01G0113370"/>
</dbReference>
<dbReference type="Gramene" id="TraesKARUn01G0119260.1">
    <property type="protein sequence ID" value="cds.TraesKARUn01G0119260.1"/>
    <property type="gene ID" value="TraesKARUn01G0119260"/>
</dbReference>
<dbReference type="Gramene" id="TraesKARUn01G0122970.1">
    <property type="protein sequence ID" value="cds.TraesKARUn01G0122970.1"/>
    <property type="gene ID" value="TraesKARUn01G0122970"/>
</dbReference>
<dbReference type="Gramene" id="TraesKARUn01G0126840.1">
    <property type="protein sequence ID" value="cds.TraesKARUn01G0126840.1"/>
    <property type="gene ID" value="TraesKARUn01G0126840"/>
</dbReference>
<dbReference type="Gramene" id="TraesKARUn01G0129370.1">
    <property type="protein sequence ID" value="cds.TraesKARUn01G0129370.1"/>
    <property type="gene ID" value="TraesKARUn01G0129370"/>
</dbReference>
<dbReference type="Gramene" id="TraesKARUn01G0133210.1">
    <property type="protein sequence ID" value="cds.TraesKARUn01G0133210.1"/>
    <property type="gene ID" value="TraesKARUn01G0133210"/>
</dbReference>
<dbReference type="Gramene" id="TraesKARUn01G0141040.1">
    <property type="protein sequence ID" value="cds.TraesKARUn01G0141040.1"/>
    <property type="gene ID" value="TraesKARUn01G0141040"/>
</dbReference>
<dbReference type="Gramene" id="TraesKARUn01G0152060.1">
    <property type="protein sequence ID" value="cds.TraesKARUn01G0152060.1"/>
    <property type="gene ID" value="TraesKARUn01G0152060"/>
</dbReference>
<dbReference type="Gramene" id="TraesKARUn01G0154950.1">
    <property type="protein sequence ID" value="cds.TraesKARUn01G0154950.1"/>
    <property type="gene ID" value="TraesKARUn01G0154950"/>
</dbReference>
<dbReference type="Gramene" id="TraesKARUn01G0155020.1">
    <property type="protein sequence ID" value="cds.TraesKARUn01G0155020.1"/>
    <property type="gene ID" value="TraesKARUn01G0155020"/>
</dbReference>
<dbReference type="Gramene" id="TraesKARUn01G0169110.1">
    <property type="protein sequence ID" value="cds.TraesKARUn01G0169110.1"/>
    <property type="gene ID" value="TraesKARUn01G0169110"/>
</dbReference>
<dbReference type="Gramene" id="TraesKARUn01G0183040.1">
    <property type="protein sequence ID" value="cds.TraesKARUn01G0183040.1"/>
    <property type="gene ID" value="TraesKARUn01G0183040"/>
</dbReference>
<dbReference type="Gramene" id="TraesKARUn01G0188510.1">
    <property type="protein sequence ID" value="cds.TraesKARUn01G0188510.1"/>
    <property type="gene ID" value="TraesKARUn01G0188510"/>
</dbReference>
<dbReference type="Gramene" id="TraesKARUn01G0189590.1">
    <property type="protein sequence ID" value="cds.TraesKARUn01G0189590.1"/>
    <property type="gene ID" value="TraesKARUn01G0189590"/>
</dbReference>
<dbReference type="Gramene" id="TraesLAC2D03G01244990.1">
    <property type="protein sequence ID" value="TraesLAC2D03G01244990.1.CDS1"/>
    <property type="gene ID" value="TraesLAC2D03G01244990"/>
</dbReference>
<dbReference type="Gramene" id="TraesLDM1D03G00486510.1">
    <property type="protein sequence ID" value="TraesLDM1D03G00486510.1.CDS1"/>
    <property type="gene ID" value="TraesLDM1D03G00486510"/>
</dbReference>
<dbReference type="Gramene" id="TraesLDM2D03G01293870.1">
    <property type="protein sequence ID" value="TraesLDM2D03G01293870.1.CDS1"/>
    <property type="gene ID" value="TraesLDM2D03G01293870"/>
</dbReference>
<dbReference type="Gramene" id="TraesMAC1D03G00483250.1">
    <property type="protein sequence ID" value="TraesMAC1D03G00483250.1.CDS1"/>
    <property type="gene ID" value="TraesMAC1D03G00483250"/>
</dbReference>
<dbReference type="Gramene" id="TraesNOR1D03G00491440.1">
    <property type="protein sequence ID" value="TraesNOR1D03G00491440.1.CDS1"/>
    <property type="gene ID" value="TraesNOR1D03G00491440"/>
</dbReference>
<dbReference type="Gramene" id="TraesNOR3B03G01768160.1">
    <property type="protein sequence ID" value="TraesNOR3B03G01768160.1.CDS1"/>
    <property type="gene ID" value="TraesNOR3B03G01768160"/>
</dbReference>
<dbReference type="Gramene" id="TraesPARA_EIv1.0_0272520.1">
    <property type="protein sequence ID" value="TraesPARA_EIv1.0_0272520.1.CDS1"/>
    <property type="gene ID" value="TraesPARA_EIv1.0_0272520"/>
</dbReference>
<dbReference type="Gramene" id="TraesPARA_EIv1.0_0757300.1">
    <property type="protein sequence ID" value="TraesPARA_EIv1.0_0757300.1.CDS1"/>
    <property type="gene ID" value="TraesPARA_EIv1.0_0757300"/>
</dbReference>
<dbReference type="Gramene" id="TraesPARA_EIv1.0_2647490.1">
    <property type="protein sequence ID" value="TraesPARA_EIv1.0_2647490.1.CDS1"/>
    <property type="gene ID" value="TraesPARA_EIv1.0_2647490"/>
</dbReference>
<dbReference type="Gramene" id="TraesPARA_EIv1.0_2652000.1">
    <property type="protein sequence ID" value="TraesPARA_EIv1.0_2652000.1.CDS1"/>
    <property type="gene ID" value="TraesPARA_EIv1.0_2652000"/>
</dbReference>
<dbReference type="Gramene" id="TraesPARA_EIv1.0_2660340.1">
    <property type="protein sequence ID" value="TraesPARA_EIv1.0_2660340.1.CDS1"/>
    <property type="gene ID" value="TraesPARA_EIv1.0_2660340"/>
</dbReference>
<dbReference type="Gramene" id="TraesPARA_EIv1.0_2664520.1">
    <property type="protein sequence ID" value="TraesPARA_EIv1.0_2664520.1.CDS1"/>
    <property type="gene ID" value="TraesPARA_EIv1.0_2664520"/>
</dbReference>
<dbReference type="Gramene" id="TraesPARA_EIv1.0_2667290.1">
    <property type="protein sequence ID" value="TraesPARA_EIv1.0_2667290.1.CDS1"/>
    <property type="gene ID" value="TraesPARA_EIv1.0_2667290"/>
</dbReference>
<dbReference type="Gramene" id="TraesPARA_EIv1.0_2671980.1">
    <property type="protein sequence ID" value="TraesPARA_EIv1.0_2671980.1.CDS1"/>
    <property type="gene ID" value="TraesPARA_EIv1.0_2671980"/>
</dbReference>
<dbReference type="Gramene" id="TraesPARA_EIv1.0_2672500.1">
    <property type="protein sequence ID" value="TraesPARA_EIv1.0_2672500.1.CDS1"/>
    <property type="gene ID" value="TraesPARA_EIv1.0_2672500"/>
</dbReference>
<dbReference type="Gramene" id="TraesRN1D0100500900.1">
    <property type="protein sequence ID" value="TraesRN1D0100500900.1"/>
    <property type="gene ID" value="TraesRN1D0100500900"/>
</dbReference>
<dbReference type="Gramene" id="TraesSTA1D03G00482510.1">
    <property type="protein sequence ID" value="TraesSTA1D03G00482510.1.CDS1"/>
    <property type="gene ID" value="TraesSTA1D03G00482510"/>
</dbReference>
<dbReference type="Gramene" id="TraesSTA2D03G01281870.1">
    <property type="protein sequence ID" value="TraesSTA2D03G01281870.1.CDS1"/>
    <property type="gene ID" value="TraesSTA2D03G01281870"/>
</dbReference>
<dbReference type="Gramene" id="TraesSTA5D03G03181740.1">
    <property type="protein sequence ID" value="TraesSTA5D03G03181740.1.CDS1"/>
    <property type="gene ID" value="TraesSTA5D03G03181740"/>
</dbReference>
<dbReference type="Gramene" id="TraesSYM1D03G00490450.1">
    <property type="protein sequence ID" value="TraesSYM1D03G00490450.1.CDS1"/>
    <property type="gene ID" value="TraesSYM1D03G00490450"/>
</dbReference>
<dbReference type="Gramene" id="TraesSYM2D03G01311500.1">
    <property type="protein sequence ID" value="TraesSYM2D03G01311500.1.CDS1"/>
    <property type="gene ID" value="TraesSYM2D03G01311500"/>
</dbReference>
<dbReference type="Gramene" id="TraesSYM6B03G03377930.1">
    <property type="protein sequence ID" value="TraesSYM6B03G03377930.1.CDS1"/>
    <property type="gene ID" value="TraesSYM6B03G03377930"/>
</dbReference>
<dbReference type="KEGG" id="taes:803096"/>
<dbReference type="eggNOG" id="KOG1758">
    <property type="taxonomic scope" value="Eukaryota"/>
</dbReference>
<dbReference type="HOGENOM" id="CLU_084338_1_2_1"/>
<dbReference type="OMA" id="MDGFARI"/>
<dbReference type="OrthoDB" id="681737at2759"/>
<dbReference type="Proteomes" id="UP000019116">
    <property type="component" value="Chloroplast"/>
</dbReference>
<dbReference type="GO" id="GO:0009535">
    <property type="term" value="C:chloroplast thylakoid membrane"/>
    <property type="evidence" value="ECO:0007669"/>
    <property type="project" value="UniProtKB-SubCell"/>
</dbReference>
<dbReference type="GO" id="GO:0045259">
    <property type="term" value="C:proton-transporting ATP synthase complex"/>
    <property type="evidence" value="ECO:0007669"/>
    <property type="project" value="UniProtKB-KW"/>
</dbReference>
<dbReference type="GO" id="GO:0005524">
    <property type="term" value="F:ATP binding"/>
    <property type="evidence" value="ECO:0007669"/>
    <property type="project" value="UniProtKB-UniRule"/>
</dbReference>
<dbReference type="GO" id="GO:0046933">
    <property type="term" value="F:proton-transporting ATP synthase activity, rotational mechanism"/>
    <property type="evidence" value="ECO:0007669"/>
    <property type="project" value="UniProtKB-UniRule"/>
</dbReference>
<dbReference type="GO" id="GO:0015986">
    <property type="term" value="P:proton motive force-driven ATP synthesis"/>
    <property type="evidence" value="ECO:0000318"/>
    <property type="project" value="GO_Central"/>
</dbReference>
<dbReference type="CDD" id="cd12152">
    <property type="entry name" value="F1-ATPase_delta"/>
    <property type="match status" value="1"/>
</dbReference>
<dbReference type="FunFam" id="2.60.15.10:FF:000002">
    <property type="entry name" value="ATP synthase epsilon chain, chloroplastic"/>
    <property type="match status" value="1"/>
</dbReference>
<dbReference type="Gene3D" id="6.10.140.480">
    <property type="match status" value="1"/>
</dbReference>
<dbReference type="Gene3D" id="2.60.15.10">
    <property type="entry name" value="F0F1 ATP synthase delta/epsilon subunit, N-terminal"/>
    <property type="match status" value="1"/>
</dbReference>
<dbReference type="HAMAP" id="MF_00530">
    <property type="entry name" value="ATP_synth_epsil_bac"/>
    <property type="match status" value="1"/>
</dbReference>
<dbReference type="InterPro" id="IPR036794">
    <property type="entry name" value="ATP_F1_dsu/esu_C_sf"/>
</dbReference>
<dbReference type="InterPro" id="IPR001469">
    <property type="entry name" value="ATP_synth_F1_dsu/esu"/>
</dbReference>
<dbReference type="InterPro" id="IPR020546">
    <property type="entry name" value="ATP_synth_F1_dsu/esu_N"/>
</dbReference>
<dbReference type="InterPro" id="IPR020547">
    <property type="entry name" value="ATP_synth_F1_esu_C"/>
</dbReference>
<dbReference type="InterPro" id="IPR036771">
    <property type="entry name" value="ATPsynth_dsu/esu_N"/>
</dbReference>
<dbReference type="NCBIfam" id="TIGR01216">
    <property type="entry name" value="ATP_synt_epsi"/>
    <property type="match status" value="1"/>
</dbReference>
<dbReference type="PANTHER" id="PTHR13822">
    <property type="entry name" value="ATP SYNTHASE DELTA/EPSILON CHAIN"/>
    <property type="match status" value="1"/>
</dbReference>
<dbReference type="PANTHER" id="PTHR13822:SF10">
    <property type="entry name" value="ATP SYNTHASE EPSILON CHAIN, CHLOROPLASTIC"/>
    <property type="match status" value="1"/>
</dbReference>
<dbReference type="Pfam" id="PF00401">
    <property type="entry name" value="ATP-synt_DE"/>
    <property type="match status" value="1"/>
</dbReference>
<dbReference type="Pfam" id="PF02823">
    <property type="entry name" value="ATP-synt_DE_N"/>
    <property type="match status" value="1"/>
</dbReference>
<dbReference type="SUPFAM" id="SSF46604">
    <property type="entry name" value="Epsilon subunit of F1F0-ATP synthase C-terminal domain"/>
    <property type="match status" value="1"/>
</dbReference>
<dbReference type="SUPFAM" id="SSF51344">
    <property type="entry name" value="Epsilon subunit of F1F0-ATP synthase N-terminal domain"/>
    <property type="match status" value="1"/>
</dbReference>
<proteinExistence type="inferred from homology"/>
<gene>
    <name evidence="1" type="primary">atpE</name>
</gene>